<name>GLTJ_ECOL6</name>
<dbReference type="EMBL" id="AE014075">
    <property type="protein sequence ID" value="AAN79211.1"/>
    <property type="molecule type" value="Genomic_DNA"/>
</dbReference>
<dbReference type="RefSeq" id="WP_000020941.1">
    <property type="nucleotide sequence ID" value="NZ_CP051263.1"/>
</dbReference>
<dbReference type="SMR" id="P0AER4"/>
<dbReference type="STRING" id="199310.c0738"/>
<dbReference type="GeneID" id="75204985"/>
<dbReference type="KEGG" id="ecc:c0738"/>
<dbReference type="eggNOG" id="COG0765">
    <property type="taxonomic scope" value="Bacteria"/>
</dbReference>
<dbReference type="HOGENOM" id="CLU_019602_1_3_6"/>
<dbReference type="BioCyc" id="ECOL199310:C0738-MONOMER"/>
<dbReference type="Proteomes" id="UP000001410">
    <property type="component" value="Chromosome"/>
</dbReference>
<dbReference type="GO" id="GO:0043190">
    <property type="term" value="C:ATP-binding cassette (ABC) transporter complex"/>
    <property type="evidence" value="ECO:0007669"/>
    <property type="project" value="InterPro"/>
</dbReference>
<dbReference type="GO" id="GO:0022857">
    <property type="term" value="F:transmembrane transporter activity"/>
    <property type="evidence" value="ECO:0007669"/>
    <property type="project" value="InterPro"/>
</dbReference>
<dbReference type="GO" id="GO:0006865">
    <property type="term" value="P:amino acid transport"/>
    <property type="evidence" value="ECO:0007669"/>
    <property type="project" value="UniProtKB-KW"/>
</dbReference>
<dbReference type="CDD" id="cd06261">
    <property type="entry name" value="TM_PBP2"/>
    <property type="match status" value="1"/>
</dbReference>
<dbReference type="FunFam" id="1.10.3720.10:FF:000021">
    <property type="entry name" value="Glutamate/aspartate ABC transporter, permease protein GltJ"/>
    <property type="match status" value="1"/>
</dbReference>
<dbReference type="Gene3D" id="1.10.3720.10">
    <property type="entry name" value="MetI-like"/>
    <property type="match status" value="1"/>
</dbReference>
<dbReference type="InterPro" id="IPR010065">
    <property type="entry name" value="AA_ABC_transptr_permease_3TM"/>
</dbReference>
<dbReference type="InterPro" id="IPR043429">
    <property type="entry name" value="ArtM/GltK/GlnP/TcyL/YhdX-like"/>
</dbReference>
<dbReference type="InterPro" id="IPR000515">
    <property type="entry name" value="MetI-like"/>
</dbReference>
<dbReference type="InterPro" id="IPR035906">
    <property type="entry name" value="MetI-like_sf"/>
</dbReference>
<dbReference type="NCBIfam" id="TIGR01726">
    <property type="entry name" value="HEQRo_perm_3TM"/>
    <property type="match status" value="1"/>
</dbReference>
<dbReference type="PANTHER" id="PTHR30614:SF42">
    <property type="entry name" value="GLUTAMATE_ASPARTATE IMPORT PERMEASE PROTEIN GLTJ"/>
    <property type="match status" value="1"/>
</dbReference>
<dbReference type="PANTHER" id="PTHR30614">
    <property type="entry name" value="MEMBRANE COMPONENT OF AMINO ACID ABC TRANSPORTER"/>
    <property type="match status" value="1"/>
</dbReference>
<dbReference type="Pfam" id="PF00528">
    <property type="entry name" value="BPD_transp_1"/>
    <property type="match status" value="1"/>
</dbReference>
<dbReference type="SUPFAM" id="SSF161098">
    <property type="entry name" value="MetI-like"/>
    <property type="match status" value="1"/>
</dbReference>
<dbReference type="PROSITE" id="PS50928">
    <property type="entry name" value="ABC_TM1"/>
    <property type="match status" value="1"/>
</dbReference>
<gene>
    <name type="primary">gltJ</name>
    <name type="ordered locus">c0738</name>
</gene>
<protein>
    <recommendedName>
        <fullName evidence="1">Glutamate/aspartate import permease protein GltJ</fullName>
    </recommendedName>
</protein>
<proteinExistence type="inferred from homology"/>
<comment type="function">
    <text evidence="1">Part of the ABC transporter complex GltIJKL involved in glutamate and aspartate uptake. Probably responsible for the translocation of the substrate across the membrane.</text>
</comment>
<comment type="subunit">
    <text evidence="1">The complex is composed of two ATP-binding proteins (GltL), two transmembrane proteins (GltJ and GltK) and a solute-binding protein (GltI).</text>
</comment>
<comment type="subcellular location">
    <subcellularLocation>
        <location evidence="1">Cell inner membrane</location>
        <topology evidence="2">Multi-pass membrane protein</topology>
    </subcellularLocation>
</comment>
<comment type="similarity">
    <text evidence="4">Belongs to the binding-protein-dependent transport system permease family. HisMQ subfamily.</text>
</comment>
<evidence type="ECO:0000250" key="1">
    <source>
        <dbReference type="UniProtKB" id="P0AER3"/>
    </source>
</evidence>
<evidence type="ECO:0000255" key="2"/>
<evidence type="ECO:0000255" key="3">
    <source>
        <dbReference type="PROSITE-ProRule" id="PRU00441"/>
    </source>
</evidence>
<evidence type="ECO:0000305" key="4"/>
<sequence length="246" mass="27503">MSIDWNWGIFLQQAPFGNTTYLGWIWSGFQVTIALSICAWIIAFLVGSFFGILRTVPNRFLSGLGTLYVELFRNVPLIVQFFTWYLVIPELLPEKIGMWFKAELDPNIQFFLSSMLCLGLFTAARVCEQVRAAIQSLPRGQKNAALAMGLTLPQAYRYVLLPNAYRVIVPPMTSEMMNLVKNSAIASTIGLVDMAAQAGKLLDYSAHAWESFTAITLAYVLINAFIMLVMTLVERKVRLPGNMGGK</sequence>
<organism>
    <name type="scientific">Escherichia coli O6:H1 (strain CFT073 / ATCC 700928 / UPEC)</name>
    <dbReference type="NCBI Taxonomy" id="199310"/>
    <lineage>
        <taxon>Bacteria</taxon>
        <taxon>Pseudomonadati</taxon>
        <taxon>Pseudomonadota</taxon>
        <taxon>Gammaproteobacteria</taxon>
        <taxon>Enterobacterales</taxon>
        <taxon>Enterobacteriaceae</taxon>
        <taxon>Escherichia</taxon>
    </lineage>
</organism>
<reference key="1">
    <citation type="journal article" date="2002" name="Proc. Natl. Acad. Sci. U.S.A.">
        <title>Extensive mosaic structure revealed by the complete genome sequence of uropathogenic Escherichia coli.</title>
        <authorList>
            <person name="Welch R.A."/>
            <person name="Burland V."/>
            <person name="Plunkett G. III"/>
            <person name="Redford P."/>
            <person name="Roesch P."/>
            <person name="Rasko D."/>
            <person name="Buckles E.L."/>
            <person name="Liou S.-R."/>
            <person name="Boutin A."/>
            <person name="Hackett J."/>
            <person name="Stroud D."/>
            <person name="Mayhew G.F."/>
            <person name="Rose D.J."/>
            <person name="Zhou S."/>
            <person name="Schwartz D.C."/>
            <person name="Perna N.T."/>
            <person name="Mobley H.L.T."/>
            <person name="Donnenberg M.S."/>
            <person name="Blattner F.R."/>
        </authorList>
    </citation>
    <scope>NUCLEOTIDE SEQUENCE [LARGE SCALE GENOMIC DNA]</scope>
    <source>
        <strain>CFT073 / ATCC 700928 / UPEC</strain>
    </source>
</reference>
<keyword id="KW-0029">Amino-acid transport</keyword>
<keyword id="KW-0997">Cell inner membrane</keyword>
<keyword id="KW-1003">Cell membrane</keyword>
<keyword id="KW-0472">Membrane</keyword>
<keyword id="KW-1185">Reference proteome</keyword>
<keyword id="KW-0812">Transmembrane</keyword>
<keyword id="KW-1133">Transmembrane helix</keyword>
<keyword id="KW-0813">Transport</keyword>
<feature type="chain" id="PRO_0000060036" description="Glutamate/aspartate import permease protein GltJ">
    <location>
        <begin position="1"/>
        <end position="246"/>
    </location>
</feature>
<feature type="transmembrane region" description="Helical" evidence="2">
    <location>
        <begin position="33"/>
        <end position="53"/>
    </location>
</feature>
<feature type="transmembrane region" description="Helical" evidence="2">
    <location>
        <begin position="74"/>
        <end position="94"/>
    </location>
</feature>
<feature type="transmembrane region" description="Helical" evidence="2">
    <location>
        <begin position="104"/>
        <end position="124"/>
    </location>
</feature>
<feature type="transmembrane region" description="Helical" evidence="2">
    <location>
        <begin position="179"/>
        <end position="196"/>
    </location>
</feature>
<feature type="transmembrane region" description="Helical" evidence="2">
    <location>
        <begin position="212"/>
        <end position="232"/>
    </location>
</feature>
<feature type="domain" description="ABC transmembrane type-1" evidence="3">
    <location>
        <begin position="29"/>
        <end position="230"/>
    </location>
</feature>
<accession>P0AER4</accession>
<accession>P41074</accession>